<dbReference type="EC" id="1.1.99.1" evidence="1"/>
<dbReference type="EC" id="1.2.1.8" evidence="1"/>
<dbReference type="EMBL" id="CP000255">
    <property type="protein sequence ID" value="ABD21676.1"/>
    <property type="molecule type" value="Genomic_DNA"/>
</dbReference>
<dbReference type="RefSeq" id="WP_000066521.1">
    <property type="nucleotide sequence ID" value="NZ_CP027476.1"/>
</dbReference>
<dbReference type="SMR" id="Q2FDP9"/>
<dbReference type="KEGG" id="saa:SAUSA300_2545"/>
<dbReference type="HOGENOM" id="CLU_002865_7_1_9"/>
<dbReference type="OMA" id="NHFESCA"/>
<dbReference type="UniPathway" id="UPA00529">
    <property type="reaction ID" value="UER00385"/>
</dbReference>
<dbReference type="Proteomes" id="UP000001939">
    <property type="component" value="Chromosome"/>
</dbReference>
<dbReference type="GO" id="GO:0016020">
    <property type="term" value="C:membrane"/>
    <property type="evidence" value="ECO:0007669"/>
    <property type="project" value="TreeGrafter"/>
</dbReference>
<dbReference type="GO" id="GO:0008802">
    <property type="term" value="F:betaine-aldehyde dehydrogenase (NAD+) activity"/>
    <property type="evidence" value="ECO:0007669"/>
    <property type="project" value="UniProtKB-EC"/>
</dbReference>
<dbReference type="GO" id="GO:0008812">
    <property type="term" value="F:choline dehydrogenase activity"/>
    <property type="evidence" value="ECO:0007669"/>
    <property type="project" value="UniProtKB-UniRule"/>
</dbReference>
<dbReference type="GO" id="GO:0050660">
    <property type="term" value="F:flavin adenine dinucleotide binding"/>
    <property type="evidence" value="ECO:0007669"/>
    <property type="project" value="InterPro"/>
</dbReference>
<dbReference type="GO" id="GO:0019285">
    <property type="term" value="P:glycine betaine biosynthetic process from choline"/>
    <property type="evidence" value="ECO:0007669"/>
    <property type="project" value="UniProtKB-UniRule"/>
</dbReference>
<dbReference type="Gene3D" id="3.50.50.60">
    <property type="entry name" value="FAD/NAD(P)-binding domain"/>
    <property type="match status" value="1"/>
</dbReference>
<dbReference type="Gene3D" id="3.30.560.10">
    <property type="entry name" value="Glucose Oxidase, domain 3"/>
    <property type="match status" value="1"/>
</dbReference>
<dbReference type="HAMAP" id="MF_00750">
    <property type="entry name" value="Choline_dehydrogen"/>
    <property type="match status" value="1"/>
</dbReference>
<dbReference type="InterPro" id="IPR011533">
    <property type="entry name" value="BetA"/>
</dbReference>
<dbReference type="InterPro" id="IPR036188">
    <property type="entry name" value="FAD/NAD-bd_sf"/>
</dbReference>
<dbReference type="InterPro" id="IPR012132">
    <property type="entry name" value="GMC_OxRdtase"/>
</dbReference>
<dbReference type="InterPro" id="IPR000172">
    <property type="entry name" value="GMC_OxRdtase_N"/>
</dbReference>
<dbReference type="InterPro" id="IPR007867">
    <property type="entry name" value="GMC_OxRtase_C"/>
</dbReference>
<dbReference type="NCBIfam" id="TIGR01810">
    <property type="entry name" value="betA"/>
    <property type="match status" value="1"/>
</dbReference>
<dbReference type="NCBIfam" id="NF002550">
    <property type="entry name" value="PRK02106.1"/>
    <property type="match status" value="1"/>
</dbReference>
<dbReference type="PANTHER" id="PTHR11552:SF147">
    <property type="entry name" value="CHOLINE DEHYDROGENASE, MITOCHONDRIAL"/>
    <property type="match status" value="1"/>
</dbReference>
<dbReference type="PANTHER" id="PTHR11552">
    <property type="entry name" value="GLUCOSE-METHANOL-CHOLINE GMC OXIDOREDUCTASE"/>
    <property type="match status" value="1"/>
</dbReference>
<dbReference type="Pfam" id="PF05199">
    <property type="entry name" value="GMC_oxred_C"/>
    <property type="match status" value="1"/>
</dbReference>
<dbReference type="Pfam" id="PF00732">
    <property type="entry name" value="GMC_oxred_N"/>
    <property type="match status" value="1"/>
</dbReference>
<dbReference type="PIRSF" id="PIRSF000137">
    <property type="entry name" value="Alcohol_oxidase"/>
    <property type="match status" value="1"/>
</dbReference>
<dbReference type="SUPFAM" id="SSF54373">
    <property type="entry name" value="FAD-linked reductases, C-terminal domain"/>
    <property type="match status" value="1"/>
</dbReference>
<dbReference type="SUPFAM" id="SSF51905">
    <property type="entry name" value="FAD/NAD(P)-binding domain"/>
    <property type="match status" value="1"/>
</dbReference>
<dbReference type="PROSITE" id="PS00623">
    <property type="entry name" value="GMC_OXRED_1"/>
    <property type="match status" value="1"/>
</dbReference>
<dbReference type="PROSITE" id="PS00624">
    <property type="entry name" value="GMC_OXRED_2"/>
    <property type="match status" value="1"/>
</dbReference>
<comment type="function">
    <text evidence="1">Involved in the biosynthesis of the osmoprotectant glycine betaine. Catalyzes the oxidation of choline to betaine aldehyde and betaine aldehyde to glycine betaine at the same rate.</text>
</comment>
<comment type="catalytic activity">
    <reaction evidence="1">
        <text>choline + A = betaine aldehyde + AH2</text>
        <dbReference type="Rhea" id="RHEA:17433"/>
        <dbReference type="ChEBI" id="CHEBI:13193"/>
        <dbReference type="ChEBI" id="CHEBI:15354"/>
        <dbReference type="ChEBI" id="CHEBI:15710"/>
        <dbReference type="ChEBI" id="CHEBI:17499"/>
        <dbReference type="EC" id="1.1.99.1"/>
    </reaction>
</comment>
<comment type="catalytic activity">
    <reaction evidence="1">
        <text>betaine aldehyde + NAD(+) + H2O = glycine betaine + NADH + 2 H(+)</text>
        <dbReference type="Rhea" id="RHEA:15305"/>
        <dbReference type="ChEBI" id="CHEBI:15377"/>
        <dbReference type="ChEBI" id="CHEBI:15378"/>
        <dbReference type="ChEBI" id="CHEBI:15710"/>
        <dbReference type="ChEBI" id="CHEBI:17750"/>
        <dbReference type="ChEBI" id="CHEBI:57540"/>
        <dbReference type="ChEBI" id="CHEBI:57945"/>
        <dbReference type="EC" id="1.2.1.8"/>
    </reaction>
</comment>
<comment type="cofactor">
    <cofactor evidence="1">
        <name>FAD</name>
        <dbReference type="ChEBI" id="CHEBI:57692"/>
    </cofactor>
</comment>
<comment type="pathway">
    <text evidence="1">Amine and polyamine biosynthesis; betaine biosynthesis via choline pathway; betaine aldehyde from choline (cytochrome c reductase route): step 1/1.</text>
</comment>
<comment type="similarity">
    <text evidence="1">Belongs to the GMC oxidoreductase family.</text>
</comment>
<feature type="chain" id="PRO_0000258936" description="Oxygen-dependent choline dehydrogenase">
    <location>
        <begin position="1"/>
        <end position="569"/>
    </location>
</feature>
<feature type="active site" description="Proton acceptor" evidence="1">
    <location>
        <position position="475"/>
    </location>
</feature>
<feature type="binding site" evidence="1">
    <location>
        <begin position="9"/>
        <end position="38"/>
    </location>
    <ligand>
        <name>FAD</name>
        <dbReference type="ChEBI" id="CHEBI:57692"/>
    </ligand>
</feature>
<accession>Q2FDP9</accession>
<keyword id="KW-0274">FAD</keyword>
<keyword id="KW-0285">Flavoprotein</keyword>
<keyword id="KW-0520">NAD</keyword>
<keyword id="KW-0560">Oxidoreductase</keyword>
<organism>
    <name type="scientific">Staphylococcus aureus (strain USA300)</name>
    <dbReference type="NCBI Taxonomy" id="367830"/>
    <lineage>
        <taxon>Bacteria</taxon>
        <taxon>Bacillati</taxon>
        <taxon>Bacillota</taxon>
        <taxon>Bacilli</taxon>
        <taxon>Bacillales</taxon>
        <taxon>Staphylococcaceae</taxon>
        <taxon>Staphylococcus</taxon>
    </lineage>
</organism>
<proteinExistence type="inferred from homology"/>
<evidence type="ECO:0000255" key="1">
    <source>
        <dbReference type="HAMAP-Rule" id="MF_00750"/>
    </source>
</evidence>
<gene>
    <name evidence="1" type="primary">betA</name>
    <name type="ordered locus">SAUSA300_2545</name>
</gene>
<sequence length="569" mass="63610">MSNKNKSYDYVIIGGGSAGSVLGNRLSEDKDKEVLVLEAGRSDYFWDLFIQMPAALMFPSGNKFYDWIYSTDEEPHMGGRKVAHARGKVLGGSSSINGMIYQRGNPMDYEGWAEPEGMETWDFAHCLPYFKKLEKTYGAAPYDKFRGHDGPIKLKRGPATNPLFQSFFDAGVEAGYHKTPDVNGFRQEGFGPFDSQVHRGRRMSASRAYLHPAMKRKNLTVETRAFVTEIHYEGRRATGVTYKKNGKLHTIDANEVILSGGAFNTPQLLQLSGIGDSEFLKSKGIEPRVHLPGVGENFEDHLEVYIQHKCKEPVSLQPSLDIKRMPFIGLQWIFTRTGAAASNHFEGGGFVRSNNEVDYPNLMFHFLPIAVRYDGQKAAVAHGYQVHVGPMYSNSRGSLKIKSKDPFEKPSIRFNYLSTEEDKKEWVEAIRVARNILSQKAMDPFNGGEISPGPEVQTDEEILDWVRRDGETALHPSCSAKMGPASDPMAVVDPLTMKVHGMENLRVVDASAMPRTTNGNIHAPVLMLAEKAADIIRGRKPLEPQYIDYYKHGVHDENEGAIEVKPYAK</sequence>
<protein>
    <recommendedName>
        <fullName evidence="1">Oxygen-dependent choline dehydrogenase</fullName>
        <shortName evidence="1">CDH</shortName>
        <shortName evidence="1">CHD</shortName>
        <ecNumber evidence="1">1.1.99.1</ecNumber>
    </recommendedName>
    <alternativeName>
        <fullName evidence="1">Betaine aldehyde dehydrogenase</fullName>
        <shortName evidence="1">BADH</shortName>
        <ecNumber evidence="1">1.2.1.8</ecNumber>
    </alternativeName>
</protein>
<name>BETA_STAA3</name>
<reference key="1">
    <citation type="journal article" date="2006" name="Lancet">
        <title>Complete genome sequence of USA300, an epidemic clone of community-acquired meticillin-resistant Staphylococcus aureus.</title>
        <authorList>
            <person name="Diep B.A."/>
            <person name="Gill S.R."/>
            <person name="Chang R.F."/>
            <person name="Phan T.H."/>
            <person name="Chen J.H."/>
            <person name="Davidson M.G."/>
            <person name="Lin F."/>
            <person name="Lin J."/>
            <person name="Carleton H.A."/>
            <person name="Mongodin E.F."/>
            <person name="Sensabaugh G.F."/>
            <person name="Perdreau-Remington F."/>
        </authorList>
    </citation>
    <scope>NUCLEOTIDE SEQUENCE [LARGE SCALE GENOMIC DNA]</scope>
    <source>
        <strain>USA300</strain>
    </source>
</reference>